<comment type="function">
    <text evidence="1">Catalyzes the acyloin condensation reaction between C atoms 2 and 3 of pyruvate and glyceraldehyde 3-phosphate to yield 1-deoxy-D-xylulose-5-phosphate (DXP).</text>
</comment>
<comment type="catalytic activity">
    <reaction evidence="1">
        <text>D-glyceraldehyde 3-phosphate + pyruvate + H(+) = 1-deoxy-D-xylulose 5-phosphate + CO2</text>
        <dbReference type="Rhea" id="RHEA:12605"/>
        <dbReference type="ChEBI" id="CHEBI:15361"/>
        <dbReference type="ChEBI" id="CHEBI:15378"/>
        <dbReference type="ChEBI" id="CHEBI:16526"/>
        <dbReference type="ChEBI" id="CHEBI:57792"/>
        <dbReference type="ChEBI" id="CHEBI:59776"/>
        <dbReference type="EC" id="2.2.1.7"/>
    </reaction>
</comment>
<comment type="cofactor">
    <cofactor evidence="1">
        <name>Mg(2+)</name>
        <dbReference type="ChEBI" id="CHEBI:18420"/>
    </cofactor>
    <text evidence="1">Binds 1 Mg(2+) ion per subunit.</text>
</comment>
<comment type="cofactor">
    <cofactor evidence="1">
        <name>thiamine diphosphate</name>
        <dbReference type="ChEBI" id="CHEBI:58937"/>
    </cofactor>
    <text evidence="1">Binds 1 thiamine pyrophosphate per subunit.</text>
</comment>
<comment type="pathway">
    <text evidence="1">Metabolic intermediate biosynthesis; 1-deoxy-D-xylulose 5-phosphate biosynthesis; 1-deoxy-D-xylulose 5-phosphate from D-glyceraldehyde 3-phosphate and pyruvate: step 1/1.</text>
</comment>
<comment type="subunit">
    <text evidence="1">Homodimer.</text>
</comment>
<comment type="similarity">
    <text evidence="1">Belongs to the transketolase family. DXPS subfamily.</text>
</comment>
<sequence length="627" mass="68648">MSLDISKYPILALANTPDELRSLPKESLPALCDELRTYLLNSVSKTSGHLASGLGVVELTVALHYVYNTPFDQLIWDVGHQAYPHKILTGRREQLSTIRQKDGLHPFPWRGESEYDVLSVGHSSTSISAALGLAICAEKEQENRKIVSVIGDGAITAGMAFEALNHAGDIHPDMLVVLNDNEMSISENVGALNNQLARVLSGSLYTSIREGGKKVLSGTPTIKELLKRTEEHLKGMVVPGTMFEELGFNYIGPVDGHDVNELVRTLKNMRNLKGPQFLHIMTKKGKGYEPAEKDPISYHGVPKFDPSNTSLPKSSGGKPTFSAVFGDFLCDMAKEDSKLMAITPAMREGSGMVRFSKEYPNQYFDAAIAEQHAVTLASGMAIAGYNPIVAIYSTFLQRGYDQLIHDVAIMDLPVMFAIDRAGLVGADGQTHQGAFDISFMRCIPNMVIMTPSDENECRQMLYTGHKHTGPSAVRYPRGSATGIQVNNEMQALEIGKGRLLRETKVTEKGERVAILNFGTFLANSLEAAEKLDATVADMRFAKPLDEALICELVTNHDVLVTIEENAISGGAGSGVIEFLMKNRLVKPVLQLGLPDEFIAQGTQEEMHTELKLDANGIEQQIRDYLDL</sequence>
<evidence type="ECO:0000255" key="1">
    <source>
        <dbReference type="HAMAP-Rule" id="MF_00315"/>
    </source>
</evidence>
<keyword id="KW-0414">Isoprene biosynthesis</keyword>
<keyword id="KW-0460">Magnesium</keyword>
<keyword id="KW-0479">Metal-binding</keyword>
<keyword id="KW-1185">Reference proteome</keyword>
<keyword id="KW-0784">Thiamine biosynthesis</keyword>
<keyword id="KW-0786">Thiamine pyrophosphate</keyword>
<keyword id="KW-0808">Transferase</keyword>
<reference key="1">
    <citation type="journal article" date="2005" name="Proc. Natl. Acad. Sci. U.S.A.">
        <title>Complete genome sequence of Vibrio fischeri: a symbiotic bacterium with pathogenic congeners.</title>
        <authorList>
            <person name="Ruby E.G."/>
            <person name="Urbanowski M."/>
            <person name="Campbell J."/>
            <person name="Dunn A."/>
            <person name="Faini M."/>
            <person name="Gunsalus R."/>
            <person name="Lostroh P."/>
            <person name="Lupp C."/>
            <person name="McCann J."/>
            <person name="Millikan D."/>
            <person name="Schaefer A."/>
            <person name="Stabb E."/>
            <person name="Stevens A."/>
            <person name="Visick K."/>
            <person name="Whistler C."/>
            <person name="Greenberg E.P."/>
        </authorList>
    </citation>
    <scope>NUCLEOTIDE SEQUENCE [LARGE SCALE GENOMIC DNA]</scope>
    <source>
        <strain>ATCC 700601 / ES114</strain>
    </source>
</reference>
<organism>
    <name type="scientific">Aliivibrio fischeri (strain ATCC 700601 / ES114)</name>
    <name type="common">Vibrio fischeri</name>
    <dbReference type="NCBI Taxonomy" id="312309"/>
    <lineage>
        <taxon>Bacteria</taxon>
        <taxon>Pseudomonadati</taxon>
        <taxon>Pseudomonadota</taxon>
        <taxon>Gammaproteobacteria</taxon>
        <taxon>Vibrionales</taxon>
        <taxon>Vibrionaceae</taxon>
        <taxon>Aliivibrio</taxon>
    </lineage>
</organism>
<name>DXS_ALIF1</name>
<proteinExistence type="inferred from homology"/>
<gene>
    <name evidence="1" type="primary">dxs</name>
    <name type="ordered locus">VF_0711</name>
</gene>
<protein>
    <recommendedName>
        <fullName evidence="1">1-deoxy-D-xylulose-5-phosphate synthase</fullName>
        <ecNumber evidence="1">2.2.1.7</ecNumber>
    </recommendedName>
    <alternativeName>
        <fullName evidence="1">1-deoxyxylulose-5-phosphate synthase</fullName>
        <shortName evidence="1">DXP synthase</shortName>
        <shortName evidence="1">DXPS</shortName>
    </alternativeName>
</protein>
<dbReference type="EC" id="2.2.1.7" evidence="1"/>
<dbReference type="EMBL" id="CP000020">
    <property type="protein sequence ID" value="AAW85206.1"/>
    <property type="molecule type" value="Genomic_DNA"/>
</dbReference>
<dbReference type="RefSeq" id="WP_011261434.1">
    <property type="nucleotide sequence ID" value="NC_006840.2"/>
</dbReference>
<dbReference type="RefSeq" id="YP_204094.1">
    <property type="nucleotide sequence ID" value="NC_006840.2"/>
</dbReference>
<dbReference type="SMR" id="Q5E6Z0"/>
<dbReference type="STRING" id="312309.VF_0711"/>
<dbReference type="EnsemblBacteria" id="AAW85206">
    <property type="protein sequence ID" value="AAW85206"/>
    <property type="gene ID" value="VF_0711"/>
</dbReference>
<dbReference type="GeneID" id="54163366"/>
<dbReference type="KEGG" id="vfi:VF_0711"/>
<dbReference type="PATRIC" id="fig|312309.11.peg.705"/>
<dbReference type="eggNOG" id="COG1154">
    <property type="taxonomic scope" value="Bacteria"/>
</dbReference>
<dbReference type="HOGENOM" id="CLU_009227_1_4_6"/>
<dbReference type="OrthoDB" id="9803371at2"/>
<dbReference type="UniPathway" id="UPA00064">
    <property type="reaction ID" value="UER00091"/>
</dbReference>
<dbReference type="Proteomes" id="UP000000537">
    <property type="component" value="Chromosome I"/>
</dbReference>
<dbReference type="GO" id="GO:0005829">
    <property type="term" value="C:cytosol"/>
    <property type="evidence" value="ECO:0007669"/>
    <property type="project" value="TreeGrafter"/>
</dbReference>
<dbReference type="GO" id="GO:0008661">
    <property type="term" value="F:1-deoxy-D-xylulose-5-phosphate synthase activity"/>
    <property type="evidence" value="ECO:0007669"/>
    <property type="project" value="UniProtKB-UniRule"/>
</dbReference>
<dbReference type="GO" id="GO:0000287">
    <property type="term" value="F:magnesium ion binding"/>
    <property type="evidence" value="ECO:0007669"/>
    <property type="project" value="UniProtKB-UniRule"/>
</dbReference>
<dbReference type="GO" id="GO:0030976">
    <property type="term" value="F:thiamine pyrophosphate binding"/>
    <property type="evidence" value="ECO:0007669"/>
    <property type="project" value="UniProtKB-UniRule"/>
</dbReference>
<dbReference type="GO" id="GO:0052865">
    <property type="term" value="P:1-deoxy-D-xylulose 5-phosphate biosynthetic process"/>
    <property type="evidence" value="ECO:0007669"/>
    <property type="project" value="UniProtKB-UniPathway"/>
</dbReference>
<dbReference type="GO" id="GO:0019288">
    <property type="term" value="P:isopentenyl diphosphate biosynthetic process, methylerythritol 4-phosphate pathway"/>
    <property type="evidence" value="ECO:0007669"/>
    <property type="project" value="TreeGrafter"/>
</dbReference>
<dbReference type="GO" id="GO:0016114">
    <property type="term" value="P:terpenoid biosynthetic process"/>
    <property type="evidence" value="ECO:0007669"/>
    <property type="project" value="UniProtKB-UniRule"/>
</dbReference>
<dbReference type="GO" id="GO:0009228">
    <property type="term" value="P:thiamine biosynthetic process"/>
    <property type="evidence" value="ECO:0007669"/>
    <property type="project" value="UniProtKB-UniRule"/>
</dbReference>
<dbReference type="CDD" id="cd02007">
    <property type="entry name" value="TPP_DXS"/>
    <property type="match status" value="1"/>
</dbReference>
<dbReference type="CDD" id="cd07033">
    <property type="entry name" value="TPP_PYR_DXS_TK_like"/>
    <property type="match status" value="1"/>
</dbReference>
<dbReference type="FunFam" id="3.40.50.920:FF:000002">
    <property type="entry name" value="1-deoxy-D-xylulose-5-phosphate synthase"/>
    <property type="match status" value="1"/>
</dbReference>
<dbReference type="FunFam" id="3.40.50.970:FF:000005">
    <property type="entry name" value="1-deoxy-D-xylulose-5-phosphate synthase"/>
    <property type="match status" value="1"/>
</dbReference>
<dbReference type="Gene3D" id="3.40.50.920">
    <property type="match status" value="1"/>
</dbReference>
<dbReference type="Gene3D" id="3.40.50.970">
    <property type="match status" value="2"/>
</dbReference>
<dbReference type="HAMAP" id="MF_00315">
    <property type="entry name" value="DXP_synth"/>
    <property type="match status" value="1"/>
</dbReference>
<dbReference type="InterPro" id="IPR005477">
    <property type="entry name" value="Dxylulose-5-P_synthase"/>
</dbReference>
<dbReference type="InterPro" id="IPR029061">
    <property type="entry name" value="THDP-binding"/>
</dbReference>
<dbReference type="InterPro" id="IPR009014">
    <property type="entry name" value="Transketo_C/PFOR_II"/>
</dbReference>
<dbReference type="InterPro" id="IPR005475">
    <property type="entry name" value="Transketolase-like_Pyr-bd"/>
</dbReference>
<dbReference type="InterPro" id="IPR020826">
    <property type="entry name" value="Transketolase_BS"/>
</dbReference>
<dbReference type="InterPro" id="IPR033248">
    <property type="entry name" value="Transketolase_C"/>
</dbReference>
<dbReference type="InterPro" id="IPR049557">
    <property type="entry name" value="Transketolase_CS"/>
</dbReference>
<dbReference type="NCBIfam" id="TIGR00204">
    <property type="entry name" value="dxs"/>
    <property type="match status" value="1"/>
</dbReference>
<dbReference type="NCBIfam" id="NF003933">
    <property type="entry name" value="PRK05444.2-2"/>
    <property type="match status" value="1"/>
</dbReference>
<dbReference type="PANTHER" id="PTHR43322">
    <property type="entry name" value="1-D-DEOXYXYLULOSE 5-PHOSPHATE SYNTHASE-RELATED"/>
    <property type="match status" value="1"/>
</dbReference>
<dbReference type="PANTHER" id="PTHR43322:SF5">
    <property type="entry name" value="1-DEOXY-D-XYLULOSE-5-PHOSPHATE SYNTHASE, CHLOROPLASTIC"/>
    <property type="match status" value="1"/>
</dbReference>
<dbReference type="Pfam" id="PF13292">
    <property type="entry name" value="DXP_synthase_N"/>
    <property type="match status" value="1"/>
</dbReference>
<dbReference type="Pfam" id="PF02779">
    <property type="entry name" value="Transket_pyr"/>
    <property type="match status" value="1"/>
</dbReference>
<dbReference type="Pfam" id="PF02780">
    <property type="entry name" value="Transketolase_C"/>
    <property type="match status" value="1"/>
</dbReference>
<dbReference type="SMART" id="SM00861">
    <property type="entry name" value="Transket_pyr"/>
    <property type="match status" value="1"/>
</dbReference>
<dbReference type="SUPFAM" id="SSF52518">
    <property type="entry name" value="Thiamin diphosphate-binding fold (THDP-binding)"/>
    <property type="match status" value="2"/>
</dbReference>
<dbReference type="SUPFAM" id="SSF52922">
    <property type="entry name" value="TK C-terminal domain-like"/>
    <property type="match status" value="1"/>
</dbReference>
<dbReference type="PROSITE" id="PS00801">
    <property type="entry name" value="TRANSKETOLASE_1"/>
    <property type="match status" value="1"/>
</dbReference>
<dbReference type="PROSITE" id="PS00802">
    <property type="entry name" value="TRANSKETOLASE_2"/>
    <property type="match status" value="1"/>
</dbReference>
<accession>Q5E6Z0</accession>
<feature type="chain" id="PRO_0000256502" description="1-deoxy-D-xylulose-5-phosphate synthase">
    <location>
        <begin position="1"/>
        <end position="627"/>
    </location>
</feature>
<feature type="binding site" evidence="1">
    <location>
        <position position="80"/>
    </location>
    <ligand>
        <name>thiamine diphosphate</name>
        <dbReference type="ChEBI" id="CHEBI:58937"/>
    </ligand>
</feature>
<feature type="binding site" evidence="1">
    <location>
        <begin position="121"/>
        <end position="123"/>
    </location>
    <ligand>
        <name>thiamine diphosphate</name>
        <dbReference type="ChEBI" id="CHEBI:58937"/>
    </ligand>
</feature>
<feature type="binding site" evidence="1">
    <location>
        <position position="152"/>
    </location>
    <ligand>
        <name>Mg(2+)</name>
        <dbReference type="ChEBI" id="CHEBI:18420"/>
    </ligand>
</feature>
<feature type="binding site" evidence="1">
    <location>
        <begin position="153"/>
        <end position="154"/>
    </location>
    <ligand>
        <name>thiamine diphosphate</name>
        <dbReference type="ChEBI" id="CHEBI:58937"/>
    </ligand>
</feature>
<feature type="binding site" evidence="1">
    <location>
        <position position="181"/>
    </location>
    <ligand>
        <name>Mg(2+)</name>
        <dbReference type="ChEBI" id="CHEBI:18420"/>
    </ligand>
</feature>
<feature type="binding site" evidence="1">
    <location>
        <position position="181"/>
    </location>
    <ligand>
        <name>thiamine diphosphate</name>
        <dbReference type="ChEBI" id="CHEBI:58937"/>
    </ligand>
</feature>
<feature type="binding site" evidence="1">
    <location>
        <position position="288"/>
    </location>
    <ligand>
        <name>thiamine diphosphate</name>
        <dbReference type="ChEBI" id="CHEBI:58937"/>
    </ligand>
</feature>
<feature type="binding site" evidence="1">
    <location>
        <position position="370"/>
    </location>
    <ligand>
        <name>thiamine diphosphate</name>
        <dbReference type="ChEBI" id="CHEBI:58937"/>
    </ligand>
</feature>